<name>PDAD1_ARCFU</name>
<reference key="1">
    <citation type="journal article" date="1997" name="Nature">
        <title>The complete genome sequence of the hyperthermophilic, sulphate-reducing archaeon Archaeoglobus fulgidus.</title>
        <authorList>
            <person name="Klenk H.-P."/>
            <person name="Clayton R.A."/>
            <person name="Tomb J.-F."/>
            <person name="White O."/>
            <person name="Nelson K.E."/>
            <person name="Ketchum K.A."/>
            <person name="Dodson R.J."/>
            <person name="Gwinn M.L."/>
            <person name="Hickey E.K."/>
            <person name="Peterson J.D."/>
            <person name="Richardson D.L."/>
            <person name="Kerlavage A.R."/>
            <person name="Graham D.E."/>
            <person name="Kyrpides N.C."/>
            <person name="Fleischmann R.D."/>
            <person name="Quackenbush J."/>
            <person name="Lee N.H."/>
            <person name="Sutton G.G."/>
            <person name="Gill S.R."/>
            <person name="Kirkness E.F."/>
            <person name="Dougherty B.A."/>
            <person name="McKenney K."/>
            <person name="Adams M.D."/>
            <person name="Loftus B.J."/>
            <person name="Peterson S.N."/>
            <person name="Reich C.I."/>
            <person name="McNeil L.K."/>
            <person name="Badger J.H."/>
            <person name="Glodek A."/>
            <person name="Zhou L."/>
            <person name="Overbeek R."/>
            <person name="Gocayne J.D."/>
            <person name="Weidman J.F."/>
            <person name="McDonald L.A."/>
            <person name="Utterback T.R."/>
            <person name="Cotton M.D."/>
            <person name="Spriggs T."/>
            <person name="Artiach P."/>
            <person name="Kaine B.P."/>
            <person name="Sykes S.M."/>
            <person name="Sadow P.W."/>
            <person name="D'Andrea K.P."/>
            <person name="Bowman C."/>
            <person name="Fujii C."/>
            <person name="Garland S.A."/>
            <person name="Mason T.M."/>
            <person name="Olsen G.J."/>
            <person name="Fraser C.M."/>
            <person name="Smith H.O."/>
            <person name="Woese C.R."/>
            <person name="Venter J.C."/>
        </authorList>
    </citation>
    <scope>NUCLEOTIDE SEQUENCE [LARGE SCALE GENOMIC DNA]</scope>
    <source>
        <strain>ATCC 49558 / DSM 4304 / JCM 9628 / NBRC 100126 / VC-16</strain>
    </source>
</reference>
<protein>
    <recommendedName>
        <fullName>Pyruvoyl-dependent arginine decarboxylase 1</fullName>
        <shortName>PvlArgDC 1</shortName>
        <ecNumber>4.1.1.19</ecNumber>
    </recommendedName>
    <component>
        <recommendedName>
            <fullName>Pyruvoyl-dependent arginine decarboxylase 1 subunit beta</fullName>
        </recommendedName>
    </component>
    <component>
        <recommendedName>
            <fullName>Pyruvoyl-dependent arginine decarboxylase 1 subunit alpha</fullName>
        </recommendedName>
    </component>
</protein>
<accession>O27983</accession>
<evidence type="ECO:0000250" key="1"/>
<evidence type="ECO:0000305" key="2"/>
<keyword id="KW-0210">Decarboxylase</keyword>
<keyword id="KW-0456">Lyase</keyword>
<keyword id="KW-0670">Pyruvate</keyword>
<keyword id="KW-1185">Reference proteome</keyword>
<feature type="chain" id="PRO_0000023304" description="Pyruvoyl-dependent arginine decarboxylase 1 subunit beta" evidence="1">
    <location>
        <begin position="1"/>
        <end position="40"/>
    </location>
</feature>
<feature type="chain" id="PRO_0000023305" description="Pyruvoyl-dependent arginine decarboxylase 1 subunit alpha" evidence="1">
    <location>
        <begin position="41"/>
        <end position="157"/>
    </location>
</feature>
<feature type="site" description="Cleavage (non-hydrolytic)" evidence="1">
    <location>
        <begin position="40"/>
        <end position="41"/>
    </location>
</feature>
<feature type="modified residue" description="Pyruvic acid (Ser)" evidence="1">
    <location>
        <position position="41"/>
    </location>
</feature>
<organism>
    <name type="scientific">Archaeoglobus fulgidus (strain ATCC 49558 / DSM 4304 / JCM 9628 / NBRC 100126 / VC-16)</name>
    <dbReference type="NCBI Taxonomy" id="224325"/>
    <lineage>
        <taxon>Archaea</taxon>
        <taxon>Methanobacteriati</taxon>
        <taxon>Methanobacteriota</taxon>
        <taxon>Archaeoglobi</taxon>
        <taxon>Archaeoglobales</taxon>
        <taxon>Archaeoglobaceae</taxon>
        <taxon>Archaeoglobus</taxon>
    </lineage>
</organism>
<sequence length="157" mass="17205">MLPRKVFFTKGVGRHTDPLVSFELALRDAGIEKFNLVTVSSIYPPYCEIVEAEKGLSELFPGQIVFCVMSRMTSNEQGKRIFASVGAAIPPDPSLNGYLTEYHGYCNGEDAGRHAEESAAYMLKTAFEIEPARTFNITVEADVEDCTTVVAAAVFVI</sequence>
<gene>
    <name type="primary">pdaD1</name>
    <name type="ordered locus">AF_2301</name>
</gene>
<proteinExistence type="inferred from homology"/>
<dbReference type="EC" id="4.1.1.19"/>
<dbReference type="EMBL" id="AE000782">
    <property type="protein sequence ID" value="AAB88952.1"/>
    <property type="status" value="ALT_INIT"/>
    <property type="molecule type" value="Genomic_DNA"/>
</dbReference>
<dbReference type="PIR" id="E69537">
    <property type="entry name" value="E69537"/>
</dbReference>
<dbReference type="SMR" id="O27983"/>
<dbReference type="STRING" id="224325.AF_2301"/>
<dbReference type="PaxDb" id="224325-AF_2301"/>
<dbReference type="EnsemblBacteria" id="AAB88952">
    <property type="protein sequence ID" value="AAB88952"/>
    <property type="gene ID" value="AF_2301"/>
</dbReference>
<dbReference type="KEGG" id="afu:AF_2301"/>
<dbReference type="eggNOG" id="arCOG04490">
    <property type="taxonomic scope" value="Archaea"/>
</dbReference>
<dbReference type="HOGENOM" id="CLU_114389_0_0_2"/>
<dbReference type="PhylomeDB" id="O27983"/>
<dbReference type="Proteomes" id="UP000002199">
    <property type="component" value="Chromosome"/>
</dbReference>
<dbReference type="GO" id="GO:0008792">
    <property type="term" value="F:arginine decarboxylase activity"/>
    <property type="evidence" value="ECO:0007669"/>
    <property type="project" value="UniProtKB-UniRule"/>
</dbReference>
<dbReference type="GO" id="GO:0006527">
    <property type="term" value="P:arginine catabolic process"/>
    <property type="evidence" value="ECO:0007669"/>
    <property type="project" value="InterPro"/>
</dbReference>
<dbReference type="Gene3D" id="3.30.60.30">
    <property type="match status" value="1"/>
</dbReference>
<dbReference type="Gene3D" id="3.50.20.10">
    <property type="entry name" value="Pyruvoyl-Dependent Histidine Decarboxylase, subunit B"/>
    <property type="match status" value="1"/>
</dbReference>
<dbReference type="HAMAP" id="MF_01404">
    <property type="entry name" value="PvlArgDC"/>
    <property type="match status" value="1"/>
</dbReference>
<dbReference type="InterPro" id="IPR016104">
    <property type="entry name" value="Pyr-dep_his/arg-deCO2ase"/>
</dbReference>
<dbReference type="InterPro" id="IPR016105">
    <property type="entry name" value="Pyr-dep_his/arg-deCO2ase_sand"/>
</dbReference>
<dbReference type="InterPro" id="IPR002724">
    <property type="entry name" value="Pyruvoyl-dep_arg_deCO2ase"/>
</dbReference>
<dbReference type="NCBIfam" id="NF009064">
    <property type="entry name" value="PRK12398.1"/>
    <property type="match status" value="1"/>
</dbReference>
<dbReference type="NCBIfam" id="TIGR00286">
    <property type="entry name" value="pyruvoyl-dependent arginine decarboxylase"/>
    <property type="match status" value="1"/>
</dbReference>
<dbReference type="PANTHER" id="PTHR40438">
    <property type="entry name" value="PYRUVOYL-DEPENDENT ARGININE DECARBOXYLASE"/>
    <property type="match status" value="1"/>
</dbReference>
<dbReference type="PANTHER" id="PTHR40438:SF1">
    <property type="entry name" value="PYRUVOYL-DEPENDENT ARGININE DECARBOXYLASE"/>
    <property type="match status" value="1"/>
</dbReference>
<dbReference type="Pfam" id="PF01862">
    <property type="entry name" value="PvlArgDC"/>
    <property type="match status" value="1"/>
</dbReference>
<dbReference type="PIRSF" id="PIRSF005216">
    <property type="entry name" value="Pyruvoyl-dep_arg_deCO2ase"/>
    <property type="match status" value="1"/>
</dbReference>
<dbReference type="SFLD" id="SFLDG01170">
    <property type="entry name" value="Pyruvoyl-dependent_arginine_de"/>
    <property type="match status" value="1"/>
</dbReference>
<dbReference type="SFLD" id="SFLDS00055">
    <property type="entry name" value="Pyruvoyl-Dependent_Histidine/A"/>
    <property type="match status" value="1"/>
</dbReference>
<dbReference type="SUPFAM" id="SSF56271">
    <property type="entry name" value="Pyruvoyl-dependent histidine and arginine decarboxylases"/>
    <property type="match status" value="1"/>
</dbReference>
<comment type="catalytic activity">
    <reaction>
        <text>L-arginine + H(+) = agmatine + CO2</text>
        <dbReference type="Rhea" id="RHEA:17641"/>
        <dbReference type="ChEBI" id="CHEBI:15378"/>
        <dbReference type="ChEBI" id="CHEBI:16526"/>
        <dbReference type="ChEBI" id="CHEBI:32682"/>
        <dbReference type="ChEBI" id="CHEBI:58145"/>
        <dbReference type="EC" id="4.1.1.19"/>
    </reaction>
</comment>
<comment type="cofactor">
    <cofactor evidence="1">
        <name>pyruvate</name>
        <dbReference type="ChEBI" id="CHEBI:15361"/>
    </cofactor>
    <text evidence="1">Binds 1 pyruvoyl group covalently per subunit.</text>
</comment>
<comment type="similarity">
    <text evidence="2">Belongs to the PdaD family.</text>
</comment>
<comment type="sequence caution" evidence="2">
    <conflict type="erroneous initiation">
        <sequence resource="EMBL-CDS" id="AAB88952"/>
    </conflict>
</comment>